<protein>
    <recommendedName>
        <fullName evidence="1">ATP-dependent Clp protease ATP-binding subunit ClpX</fullName>
    </recommendedName>
</protein>
<keyword id="KW-0067">ATP-binding</keyword>
<keyword id="KW-0143">Chaperone</keyword>
<keyword id="KW-0479">Metal-binding</keyword>
<keyword id="KW-0547">Nucleotide-binding</keyword>
<keyword id="KW-1185">Reference proteome</keyword>
<keyword id="KW-0862">Zinc</keyword>
<name>CLPX_SHEDO</name>
<evidence type="ECO:0000255" key="1">
    <source>
        <dbReference type="HAMAP-Rule" id="MF_00175"/>
    </source>
</evidence>
<evidence type="ECO:0000255" key="2">
    <source>
        <dbReference type="PROSITE-ProRule" id="PRU01250"/>
    </source>
</evidence>
<gene>
    <name evidence="1" type="primary">clpX</name>
    <name type="ordered locus">Sden_2494</name>
</gene>
<accession>Q12LA2</accession>
<sequence>MGDNKNNGDSGKLLYCSFCGKSQHEVRKLIAGPSVYVCDECVELCNDIIREEIKEISPKRDHDKLPTPHELRNHLDEYVIGQDKAKKVLAVAVYNHYKRLRNGTTKEGVELGKSNILLIGPTGSGKTLLAETLARSLNVPFAMADATTLTEAGYVGEDVENIIQKLLQKCDYDVEKAQRGIVYIDEIDKISRKSDNPSITRDVSGEGVQQALLKLIEGTVASVPPQGGRKHPQQEFLQVDTSKILFICGGAFAGLEKVIEQRAHTGTGIGFGAEVKGEQDKATISQILGQVEPEDLVKYGLIPEFIGRLPVVATLTELDESALIQILSQPKNALTKQYGALFEMENVELEFREDALKAIAKKAMSRKTGARGLRSIVEGILLDTMYDLPTVKGVVKAVIDESVVKGESDPILIYENNDTKAASGEQ</sequence>
<reference key="1">
    <citation type="submission" date="2006-03" db="EMBL/GenBank/DDBJ databases">
        <title>Complete sequence of Shewanella denitrificans OS217.</title>
        <authorList>
            <consortium name="US DOE Joint Genome Institute"/>
            <person name="Copeland A."/>
            <person name="Lucas S."/>
            <person name="Lapidus A."/>
            <person name="Barry K."/>
            <person name="Detter J.C."/>
            <person name="Glavina del Rio T."/>
            <person name="Hammon N."/>
            <person name="Israni S."/>
            <person name="Dalin E."/>
            <person name="Tice H."/>
            <person name="Pitluck S."/>
            <person name="Brettin T."/>
            <person name="Bruce D."/>
            <person name="Han C."/>
            <person name="Tapia R."/>
            <person name="Gilna P."/>
            <person name="Kiss H."/>
            <person name="Schmutz J."/>
            <person name="Larimer F."/>
            <person name="Land M."/>
            <person name="Hauser L."/>
            <person name="Kyrpides N."/>
            <person name="Lykidis A."/>
            <person name="Richardson P."/>
        </authorList>
    </citation>
    <scope>NUCLEOTIDE SEQUENCE [LARGE SCALE GENOMIC DNA]</scope>
    <source>
        <strain>OS217 / ATCC BAA-1090 / DSM 15013</strain>
    </source>
</reference>
<proteinExistence type="inferred from homology"/>
<comment type="function">
    <text evidence="1">ATP-dependent specificity component of the Clp protease. It directs the protease to specific substrates. Can perform chaperone functions in the absence of ClpP.</text>
</comment>
<comment type="subunit">
    <text evidence="1">Component of the ClpX-ClpP complex. Forms a hexameric ring that, in the presence of ATP, binds to fourteen ClpP subunits assembled into a disk-like structure with a central cavity, resembling the structure of eukaryotic proteasomes.</text>
</comment>
<comment type="similarity">
    <text evidence="1">Belongs to the ClpX chaperone family.</text>
</comment>
<organism>
    <name type="scientific">Shewanella denitrificans (strain OS217 / ATCC BAA-1090 / DSM 15013)</name>
    <dbReference type="NCBI Taxonomy" id="318161"/>
    <lineage>
        <taxon>Bacteria</taxon>
        <taxon>Pseudomonadati</taxon>
        <taxon>Pseudomonadota</taxon>
        <taxon>Gammaproteobacteria</taxon>
        <taxon>Alteromonadales</taxon>
        <taxon>Shewanellaceae</taxon>
        <taxon>Shewanella</taxon>
    </lineage>
</organism>
<feature type="chain" id="PRO_1000024652" description="ATP-dependent Clp protease ATP-binding subunit ClpX">
    <location>
        <begin position="1"/>
        <end position="426"/>
    </location>
</feature>
<feature type="domain" description="ClpX-type ZB" evidence="2">
    <location>
        <begin position="4"/>
        <end position="57"/>
    </location>
</feature>
<feature type="binding site" evidence="2">
    <location>
        <position position="16"/>
    </location>
    <ligand>
        <name>Zn(2+)</name>
        <dbReference type="ChEBI" id="CHEBI:29105"/>
    </ligand>
</feature>
<feature type="binding site" evidence="2">
    <location>
        <position position="19"/>
    </location>
    <ligand>
        <name>Zn(2+)</name>
        <dbReference type="ChEBI" id="CHEBI:29105"/>
    </ligand>
</feature>
<feature type="binding site" evidence="2">
    <location>
        <position position="38"/>
    </location>
    <ligand>
        <name>Zn(2+)</name>
        <dbReference type="ChEBI" id="CHEBI:29105"/>
    </ligand>
</feature>
<feature type="binding site" evidence="2">
    <location>
        <position position="41"/>
    </location>
    <ligand>
        <name>Zn(2+)</name>
        <dbReference type="ChEBI" id="CHEBI:29105"/>
    </ligand>
</feature>
<feature type="binding site" evidence="1">
    <location>
        <begin position="121"/>
        <end position="128"/>
    </location>
    <ligand>
        <name>ATP</name>
        <dbReference type="ChEBI" id="CHEBI:30616"/>
    </ligand>
</feature>
<dbReference type="EMBL" id="CP000302">
    <property type="protein sequence ID" value="ABE55774.1"/>
    <property type="molecule type" value="Genomic_DNA"/>
</dbReference>
<dbReference type="RefSeq" id="WP_011496925.1">
    <property type="nucleotide sequence ID" value="NC_007954.1"/>
</dbReference>
<dbReference type="SMR" id="Q12LA2"/>
<dbReference type="STRING" id="318161.Sden_2494"/>
<dbReference type="KEGG" id="sdn:Sden_2494"/>
<dbReference type="eggNOG" id="COG1219">
    <property type="taxonomic scope" value="Bacteria"/>
</dbReference>
<dbReference type="HOGENOM" id="CLU_014218_8_2_6"/>
<dbReference type="OrthoDB" id="9804062at2"/>
<dbReference type="Proteomes" id="UP000001982">
    <property type="component" value="Chromosome"/>
</dbReference>
<dbReference type="GO" id="GO:0009376">
    <property type="term" value="C:HslUV protease complex"/>
    <property type="evidence" value="ECO:0007669"/>
    <property type="project" value="TreeGrafter"/>
</dbReference>
<dbReference type="GO" id="GO:0005524">
    <property type="term" value="F:ATP binding"/>
    <property type="evidence" value="ECO:0007669"/>
    <property type="project" value="UniProtKB-UniRule"/>
</dbReference>
<dbReference type="GO" id="GO:0016887">
    <property type="term" value="F:ATP hydrolysis activity"/>
    <property type="evidence" value="ECO:0007669"/>
    <property type="project" value="InterPro"/>
</dbReference>
<dbReference type="GO" id="GO:0140662">
    <property type="term" value="F:ATP-dependent protein folding chaperone"/>
    <property type="evidence" value="ECO:0007669"/>
    <property type="project" value="InterPro"/>
</dbReference>
<dbReference type="GO" id="GO:0046983">
    <property type="term" value="F:protein dimerization activity"/>
    <property type="evidence" value="ECO:0007669"/>
    <property type="project" value="InterPro"/>
</dbReference>
<dbReference type="GO" id="GO:0051082">
    <property type="term" value="F:unfolded protein binding"/>
    <property type="evidence" value="ECO:0007669"/>
    <property type="project" value="UniProtKB-UniRule"/>
</dbReference>
<dbReference type="GO" id="GO:0008270">
    <property type="term" value="F:zinc ion binding"/>
    <property type="evidence" value="ECO:0007669"/>
    <property type="project" value="InterPro"/>
</dbReference>
<dbReference type="GO" id="GO:0051301">
    <property type="term" value="P:cell division"/>
    <property type="evidence" value="ECO:0007669"/>
    <property type="project" value="TreeGrafter"/>
</dbReference>
<dbReference type="GO" id="GO:0051603">
    <property type="term" value="P:proteolysis involved in protein catabolic process"/>
    <property type="evidence" value="ECO:0007669"/>
    <property type="project" value="TreeGrafter"/>
</dbReference>
<dbReference type="CDD" id="cd19497">
    <property type="entry name" value="RecA-like_ClpX"/>
    <property type="match status" value="1"/>
</dbReference>
<dbReference type="FunFam" id="1.10.8.60:FF:000002">
    <property type="entry name" value="ATP-dependent Clp protease ATP-binding subunit ClpX"/>
    <property type="match status" value="1"/>
</dbReference>
<dbReference type="FunFam" id="3.40.50.300:FF:000005">
    <property type="entry name" value="ATP-dependent Clp protease ATP-binding subunit ClpX"/>
    <property type="match status" value="1"/>
</dbReference>
<dbReference type="Gene3D" id="1.10.8.60">
    <property type="match status" value="1"/>
</dbReference>
<dbReference type="Gene3D" id="6.20.220.10">
    <property type="entry name" value="ClpX chaperone, C4-type zinc finger domain"/>
    <property type="match status" value="1"/>
</dbReference>
<dbReference type="Gene3D" id="3.40.50.300">
    <property type="entry name" value="P-loop containing nucleotide triphosphate hydrolases"/>
    <property type="match status" value="1"/>
</dbReference>
<dbReference type="HAMAP" id="MF_00175">
    <property type="entry name" value="ClpX"/>
    <property type="match status" value="1"/>
</dbReference>
<dbReference type="InterPro" id="IPR003593">
    <property type="entry name" value="AAA+_ATPase"/>
</dbReference>
<dbReference type="InterPro" id="IPR050052">
    <property type="entry name" value="ATP-dep_Clp_protease_ClpX"/>
</dbReference>
<dbReference type="InterPro" id="IPR003959">
    <property type="entry name" value="ATPase_AAA_core"/>
</dbReference>
<dbReference type="InterPro" id="IPR019489">
    <property type="entry name" value="Clp_ATPase_C"/>
</dbReference>
<dbReference type="InterPro" id="IPR004487">
    <property type="entry name" value="Clp_protease_ATP-bd_su_ClpX"/>
</dbReference>
<dbReference type="InterPro" id="IPR046425">
    <property type="entry name" value="ClpX_bact"/>
</dbReference>
<dbReference type="InterPro" id="IPR027417">
    <property type="entry name" value="P-loop_NTPase"/>
</dbReference>
<dbReference type="InterPro" id="IPR010603">
    <property type="entry name" value="Znf_CppX_C4"/>
</dbReference>
<dbReference type="InterPro" id="IPR038366">
    <property type="entry name" value="Znf_CppX_C4_sf"/>
</dbReference>
<dbReference type="NCBIfam" id="TIGR00382">
    <property type="entry name" value="clpX"/>
    <property type="match status" value="1"/>
</dbReference>
<dbReference type="NCBIfam" id="NF003745">
    <property type="entry name" value="PRK05342.1"/>
    <property type="match status" value="1"/>
</dbReference>
<dbReference type="PANTHER" id="PTHR48102:SF7">
    <property type="entry name" value="ATP-DEPENDENT CLP PROTEASE ATP-BINDING SUBUNIT CLPX-LIKE, MITOCHONDRIAL"/>
    <property type="match status" value="1"/>
</dbReference>
<dbReference type="PANTHER" id="PTHR48102">
    <property type="entry name" value="ATP-DEPENDENT CLP PROTEASE ATP-BINDING SUBUNIT CLPX-LIKE, MITOCHONDRIAL-RELATED"/>
    <property type="match status" value="1"/>
</dbReference>
<dbReference type="Pfam" id="PF07724">
    <property type="entry name" value="AAA_2"/>
    <property type="match status" value="1"/>
</dbReference>
<dbReference type="Pfam" id="PF10431">
    <property type="entry name" value="ClpB_D2-small"/>
    <property type="match status" value="1"/>
</dbReference>
<dbReference type="Pfam" id="PF06689">
    <property type="entry name" value="zf-C4_ClpX"/>
    <property type="match status" value="1"/>
</dbReference>
<dbReference type="SMART" id="SM00382">
    <property type="entry name" value="AAA"/>
    <property type="match status" value="1"/>
</dbReference>
<dbReference type="SMART" id="SM01086">
    <property type="entry name" value="ClpB_D2-small"/>
    <property type="match status" value="1"/>
</dbReference>
<dbReference type="SMART" id="SM00994">
    <property type="entry name" value="zf-C4_ClpX"/>
    <property type="match status" value="1"/>
</dbReference>
<dbReference type="SUPFAM" id="SSF57716">
    <property type="entry name" value="Glucocorticoid receptor-like (DNA-binding domain)"/>
    <property type="match status" value="1"/>
</dbReference>
<dbReference type="SUPFAM" id="SSF52540">
    <property type="entry name" value="P-loop containing nucleoside triphosphate hydrolases"/>
    <property type="match status" value="1"/>
</dbReference>
<dbReference type="PROSITE" id="PS51902">
    <property type="entry name" value="CLPX_ZB"/>
    <property type="match status" value="1"/>
</dbReference>